<reference key="1">
    <citation type="journal article" date="2008" name="J. Bacteriol.">
        <title>Genome sequence of Staphylococcus aureus strain Newman and comparative analysis of staphylococcal genomes: polymorphism and evolution of two major pathogenicity islands.</title>
        <authorList>
            <person name="Baba T."/>
            <person name="Bae T."/>
            <person name="Schneewind O."/>
            <person name="Takeuchi F."/>
            <person name="Hiramatsu K."/>
        </authorList>
    </citation>
    <scope>NUCLEOTIDE SEQUENCE [LARGE SCALE GENOMIC DNA]</scope>
    <source>
        <strain>Newman</strain>
    </source>
</reference>
<name>PSMA2_STAAE</name>
<dbReference type="EMBL" id="AP009351">
    <property type="protein sequence ID" value="BAH22634.1"/>
    <property type="molecule type" value="Genomic_DNA"/>
</dbReference>
<dbReference type="KEGG" id="sae:NWMN_2618"/>
<dbReference type="HOGENOM" id="CLU_222042_0_0_9"/>
<dbReference type="Proteomes" id="UP000006386">
    <property type="component" value="Chromosome"/>
</dbReference>
<dbReference type="GO" id="GO:0031640">
    <property type="term" value="P:killing of cells of another organism"/>
    <property type="evidence" value="ECO:0007669"/>
    <property type="project" value="UniProtKB-KW"/>
</dbReference>
<dbReference type="InterPro" id="IPR031429">
    <property type="entry name" value="PSM_alpha"/>
</dbReference>
<dbReference type="NCBIfam" id="NF033425">
    <property type="entry name" value="PSM_alpha_1_2"/>
    <property type="match status" value="1"/>
</dbReference>
<dbReference type="Pfam" id="PF17063">
    <property type="entry name" value="PSMalpha"/>
    <property type="match status" value="1"/>
</dbReference>
<organism>
    <name type="scientific">Staphylococcus aureus (strain Newman)</name>
    <dbReference type="NCBI Taxonomy" id="426430"/>
    <lineage>
        <taxon>Bacteria</taxon>
        <taxon>Bacillati</taxon>
        <taxon>Bacillota</taxon>
        <taxon>Bacilli</taxon>
        <taxon>Bacillales</taxon>
        <taxon>Staphylococcaceae</taxon>
        <taxon>Staphylococcus</taxon>
    </lineage>
</organism>
<gene>
    <name type="primary">psmA2</name>
    <name type="ordered locus">NWMN_0417.3</name>
    <name type="ORF">NWMN_2618</name>
</gene>
<feature type="peptide" id="PRO_0000345050" description="Phenol-soluble modulin alpha 2 peptide">
    <location>
        <begin position="1"/>
        <end position="21"/>
    </location>
</feature>
<sequence length="21" mass="2278">MGIIAGIIKFIKGLIEKFTGK</sequence>
<protein>
    <recommendedName>
        <fullName>Phenol-soluble modulin alpha 2 peptide</fullName>
    </recommendedName>
</protein>
<accession>P0C7Z7</accession>
<accession>B9ZUX6</accession>
<comment type="function">
    <text evidence="1">Peptide which can recruit, activate and subsequently lyse human neutrophils, thus eliminating the main cellular defense against infection.</text>
</comment>
<comment type="similarity">
    <text evidence="2">Belongs to the phenol-soluble modulin alpha peptides family.</text>
</comment>
<proteinExistence type="inferred from homology"/>
<keyword id="KW-0204">Cytolysis</keyword>
<keyword id="KW-0843">Virulence</keyword>
<evidence type="ECO:0000250" key="1">
    <source>
        <dbReference type="UniProtKB" id="A9JX06"/>
    </source>
</evidence>
<evidence type="ECO:0000305" key="2"/>